<organism>
    <name type="scientific">Vibrio vulnificus (strain CMCP6)</name>
    <dbReference type="NCBI Taxonomy" id="216895"/>
    <lineage>
        <taxon>Bacteria</taxon>
        <taxon>Pseudomonadati</taxon>
        <taxon>Pseudomonadota</taxon>
        <taxon>Gammaproteobacteria</taxon>
        <taxon>Vibrionales</taxon>
        <taxon>Vibrionaceae</taxon>
        <taxon>Vibrio</taxon>
    </lineage>
</organism>
<proteinExistence type="inferred from homology"/>
<keyword id="KW-0028">Amino-acid biosynthesis</keyword>
<keyword id="KW-0057">Aromatic amino acid biosynthesis</keyword>
<keyword id="KW-0067">ATP-binding</keyword>
<keyword id="KW-0963">Cytoplasm</keyword>
<keyword id="KW-0418">Kinase</keyword>
<keyword id="KW-0460">Magnesium</keyword>
<keyword id="KW-0479">Metal-binding</keyword>
<keyword id="KW-0547">Nucleotide-binding</keyword>
<keyword id="KW-0808">Transferase</keyword>
<reference key="1">
    <citation type="submission" date="2002-12" db="EMBL/GenBank/DDBJ databases">
        <title>Complete genome sequence of Vibrio vulnificus CMCP6.</title>
        <authorList>
            <person name="Rhee J.H."/>
            <person name="Kim S.Y."/>
            <person name="Chung S.S."/>
            <person name="Kim J.J."/>
            <person name="Moon Y.H."/>
            <person name="Jeong H."/>
            <person name="Choy H.E."/>
        </authorList>
    </citation>
    <scope>NUCLEOTIDE SEQUENCE [LARGE SCALE GENOMIC DNA]</scope>
    <source>
        <strain>CMCP6</strain>
    </source>
</reference>
<evidence type="ECO:0000255" key="1">
    <source>
        <dbReference type="HAMAP-Rule" id="MF_00109"/>
    </source>
</evidence>
<feature type="chain" id="PRO_0000192424" description="Shikimate kinase">
    <location>
        <begin position="1"/>
        <end position="172"/>
    </location>
</feature>
<feature type="binding site" evidence="1">
    <location>
        <begin position="14"/>
        <end position="19"/>
    </location>
    <ligand>
        <name>ATP</name>
        <dbReference type="ChEBI" id="CHEBI:30616"/>
    </ligand>
</feature>
<feature type="binding site" evidence="1">
    <location>
        <position position="18"/>
    </location>
    <ligand>
        <name>Mg(2+)</name>
        <dbReference type="ChEBI" id="CHEBI:18420"/>
    </ligand>
</feature>
<feature type="binding site" evidence="1">
    <location>
        <position position="36"/>
    </location>
    <ligand>
        <name>substrate</name>
    </ligand>
</feature>
<feature type="binding site" evidence="1">
    <location>
        <position position="60"/>
    </location>
    <ligand>
        <name>substrate</name>
    </ligand>
</feature>
<feature type="binding site" evidence="1">
    <location>
        <position position="82"/>
    </location>
    <ligand>
        <name>substrate</name>
    </ligand>
</feature>
<feature type="binding site" evidence="1">
    <location>
        <position position="120"/>
    </location>
    <ligand>
        <name>ATP</name>
        <dbReference type="ChEBI" id="CHEBI:30616"/>
    </ligand>
</feature>
<feature type="binding site" evidence="1">
    <location>
        <position position="139"/>
    </location>
    <ligand>
        <name>substrate</name>
    </ligand>
</feature>
<feature type="binding site" evidence="1">
    <location>
        <position position="156"/>
    </location>
    <ligand>
        <name>ATP</name>
        <dbReference type="ChEBI" id="CHEBI:30616"/>
    </ligand>
</feature>
<sequence>MAEKRNIFLVGPMGAGKSTIGRYLAQQLHMEFLDSDTVIEERTGADISWVFDVEGEEGFRKREEAVINDLTLEQGIVLATGGGSVKSRENRNRLSARGIVVYLETTIEKQLARTNRDKKRPLLQTDNPREVLESLAGERNPLYEEIADYTVRTDDQSAKVVANQIVKMLEES</sequence>
<protein>
    <recommendedName>
        <fullName evidence="1">Shikimate kinase</fullName>
        <shortName evidence="1">SK</shortName>
        <ecNumber evidence="1">2.7.1.71</ecNumber>
    </recommendedName>
</protein>
<name>AROK_VIBVU</name>
<comment type="function">
    <text evidence="1">Catalyzes the specific phosphorylation of the 3-hydroxyl group of shikimic acid using ATP as a cosubstrate.</text>
</comment>
<comment type="catalytic activity">
    <reaction evidence="1">
        <text>shikimate + ATP = 3-phosphoshikimate + ADP + H(+)</text>
        <dbReference type="Rhea" id="RHEA:13121"/>
        <dbReference type="ChEBI" id="CHEBI:15378"/>
        <dbReference type="ChEBI" id="CHEBI:30616"/>
        <dbReference type="ChEBI" id="CHEBI:36208"/>
        <dbReference type="ChEBI" id="CHEBI:145989"/>
        <dbReference type="ChEBI" id="CHEBI:456216"/>
        <dbReference type="EC" id="2.7.1.71"/>
    </reaction>
</comment>
<comment type="cofactor">
    <cofactor evidence="1">
        <name>Mg(2+)</name>
        <dbReference type="ChEBI" id="CHEBI:18420"/>
    </cofactor>
    <text evidence="1">Binds 1 Mg(2+) ion per subunit.</text>
</comment>
<comment type="pathway">
    <text evidence="1">Metabolic intermediate biosynthesis; chorismate biosynthesis; chorismate from D-erythrose 4-phosphate and phosphoenolpyruvate: step 5/7.</text>
</comment>
<comment type="subunit">
    <text evidence="1">Monomer.</text>
</comment>
<comment type="subcellular location">
    <subcellularLocation>
        <location evidence="1">Cytoplasm</location>
    </subcellularLocation>
</comment>
<comment type="similarity">
    <text evidence="1">Belongs to the shikimate kinase family.</text>
</comment>
<dbReference type="EC" id="2.7.1.71" evidence="1"/>
<dbReference type="EMBL" id="AE016795">
    <property type="protein sequence ID" value="AAO09831.1"/>
    <property type="molecule type" value="Genomic_DNA"/>
</dbReference>
<dbReference type="RefSeq" id="WP_011079357.1">
    <property type="nucleotide sequence ID" value="NC_004459.3"/>
</dbReference>
<dbReference type="SMR" id="Q8DCM1"/>
<dbReference type="GeneID" id="93895646"/>
<dbReference type="KEGG" id="vvu:VV1_1382"/>
<dbReference type="HOGENOM" id="CLU_057607_2_2_6"/>
<dbReference type="UniPathway" id="UPA00053">
    <property type="reaction ID" value="UER00088"/>
</dbReference>
<dbReference type="Proteomes" id="UP000002275">
    <property type="component" value="Chromosome 1"/>
</dbReference>
<dbReference type="GO" id="GO:0005829">
    <property type="term" value="C:cytosol"/>
    <property type="evidence" value="ECO:0007669"/>
    <property type="project" value="TreeGrafter"/>
</dbReference>
<dbReference type="GO" id="GO:0005524">
    <property type="term" value="F:ATP binding"/>
    <property type="evidence" value="ECO:0007669"/>
    <property type="project" value="UniProtKB-UniRule"/>
</dbReference>
<dbReference type="GO" id="GO:0000287">
    <property type="term" value="F:magnesium ion binding"/>
    <property type="evidence" value="ECO:0007669"/>
    <property type="project" value="UniProtKB-UniRule"/>
</dbReference>
<dbReference type="GO" id="GO:0004765">
    <property type="term" value="F:shikimate kinase activity"/>
    <property type="evidence" value="ECO:0007669"/>
    <property type="project" value="UniProtKB-UniRule"/>
</dbReference>
<dbReference type="GO" id="GO:0008652">
    <property type="term" value="P:amino acid biosynthetic process"/>
    <property type="evidence" value="ECO:0007669"/>
    <property type="project" value="UniProtKB-KW"/>
</dbReference>
<dbReference type="GO" id="GO:0009073">
    <property type="term" value="P:aromatic amino acid family biosynthetic process"/>
    <property type="evidence" value="ECO:0007669"/>
    <property type="project" value="UniProtKB-KW"/>
</dbReference>
<dbReference type="GO" id="GO:0009423">
    <property type="term" value="P:chorismate biosynthetic process"/>
    <property type="evidence" value="ECO:0007669"/>
    <property type="project" value="UniProtKB-UniRule"/>
</dbReference>
<dbReference type="CDD" id="cd00464">
    <property type="entry name" value="SK"/>
    <property type="match status" value="1"/>
</dbReference>
<dbReference type="FunFam" id="3.40.50.300:FF:000099">
    <property type="entry name" value="Shikimate kinase 1"/>
    <property type="match status" value="1"/>
</dbReference>
<dbReference type="Gene3D" id="3.40.50.300">
    <property type="entry name" value="P-loop containing nucleotide triphosphate hydrolases"/>
    <property type="match status" value="1"/>
</dbReference>
<dbReference type="HAMAP" id="MF_00109">
    <property type="entry name" value="Shikimate_kinase"/>
    <property type="match status" value="1"/>
</dbReference>
<dbReference type="InterPro" id="IPR027417">
    <property type="entry name" value="P-loop_NTPase"/>
</dbReference>
<dbReference type="InterPro" id="IPR031322">
    <property type="entry name" value="Shikimate/glucono_kinase"/>
</dbReference>
<dbReference type="InterPro" id="IPR000623">
    <property type="entry name" value="Shikimate_kinase/TSH1"/>
</dbReference>
<dbReference type="InterPro" id="IPR023000">
    <property type="entry name" value="Shikimate_kinase_CS"/>
</dbReference>
<dbReference type="NCBIfam" id="NF003456">
    <property type="entry name" value="PRK05057.1"/>
    <property type="match status" value="1"/>
</dbReference>
<dbReference type="PANTHER" id="PTHR21087">
    <property type="entry name" value="SHIKIMATE KINASE"/>
    <property type="match status" value="1"/>
</dbReference>
<dbReference type="PANTHER" id="PTHR21087:SF16">
    <property type="entry name" value="SHIKIMATE KINASE 1, CHLOROPLASTIC"/>
    <property type="match status" value="1"/>
</dbReference>
<dbReference type="Pfam" id="PF01202">
    <property type="entry name" value="SKI"/>
    <property type="match status" value="1"/>
</dbReference>
<dbReference type="PRINTS" id="PR01100">
    <property type="entry name" value="SHIKIMTKNASE"/>
</dbReference>
<dbReference type="SUPFAM" id="SSF52540">
    <property type="entry name" value="P-loop containing nucleoside triphosphate hydrolases"/>
    <property type="match status" value="1"/>
</dbReference>
<dbReference type="PROSITE" id="PS01128">
    <property type="entry name" value="SHIKIMATE_KINASE"/>
    <property type="match status" value="1"/>
</dbReference>
<gene>
    <name evidence="1" type="primary">aroK</name>
    <name type="ordered locus">VV1_1382</name>
</gene>
<accession>Q8DCM1</accession>